<accession>Q0I1B7</accession>
<comment type="function">
    <text evidence="1">Involved in the biosynthesis of the chorismate, which leads to the biosynthesis of aromatic amino acids. Catalyzes the reversible NADPH linked reduction of 3-dehydroshikimate (DHSA) to yield shikimate (SA).</text>
</comment>
<comment type="catalytic activity">
    <reaction evidence="1">
        <text>shikimate + NADP(+) = 3-dehydroshikimate + NADPH + H(+)</text>
        <dbReference type="Rhea" id="RHEA:17737"/>
        <dbReference type="ChEBI" id="CHEBI:15378"/>
        <dbReference type="ChEBI" id="CHEBI:16630"/>
        <dbReference type="ChEBI" id="CHEBI:36208"/>
        <dbReference type="ChEBI" id="CHEBI:57783"/>
        <dbReference type="ChEBI" id="CHEBI:58349"/>
        <dbReference type="EC" id="1.1.1.25"/>
    </reaction>
</comment>
<comment type="pathway">
    <text evidence="1">Metabolic intermediate biosynthesis; chorismate biosynthesis; chorismate from D-erythrose 4-phosphate and phosphoenolpyruvate: step 4/7.</text>
</comment>
<comment type="subunit">
    <text evidence="1">Homodimer.</text>
</comment>
<comment type="similarity">
    <text evidence="1">Belongs to the shikimate dehydrogenase family.</text>
</comment>
<reference key="1">
    <citation type="journal article" date="2007" name="J. Bacteriol.">
        <title>Complete genome sequence of Haemophilus somnus (Histophilus somni) strain 129Pt and comparison to Haemophilus ducreyi 35000HP and Haemophilus influenzae Rd.</title>
        <authorList>
            <person name="Challacombe J.F."/>
            <person name="Duncan A.J."/>
            <person name="Brettin T.S."/>
            <person name="Bruce D."/>
            <person name="Chertkov O."/>
            <person name="Detter J.C."/>
            <person name="Han C.S."/>
            <person name="Misra M."/>
            <person name="Richardson P."/>
            <person name="Tapia R."/>
            <person name="Thayer N."/>
            <person name="Xie G."/>
            <person name="Inzana T.J."/>
        </authorList>
    </citation>
    <scope>NUCLEOTIDE SEQUENCE [LARGE SCALE GENOMIC DNA]</scope>
    <source>
        <strain>129Pt</strain>
    </source>
</reference>
<evidence type="ECO:0000255" key="1">
    <source>
        <dbReference type="HAMAP-Rule" id="MF_00222"/>
    </source>
</evidence>
<organism>
    <name type="scientific">Histophilus somni (strain 129Pt)</name>
    <name type="common">Haemophilus somnus</name>
    <dbReference type="NCBI Taxonomy" id="205914"/>
    <lineage>
        <taxon>Bacteria</taxon>
        <taxon>Pseudomonadati</taxon>
        <taxon>Pseudomonadota</taxon>
        <taxon>Gammaproteobacteria</taxon>
        <taxon>Pasteurellales</taxon>
        <taxon>Pasteurellaceae</taxon>
        <taxon>Histophilus</taxon>
    </lineage>
</organism>
<protein>
    <recommendedName>
        <fullName evidence="1">Shikimate dehydrogenase (NADP(+))</fullName>
        <shortName evidence="1">SDH</shortName>
        <ecNumber evidence="1">1.1.1.25</ecNumber>
    </recommendedName>
</protein>
<gene>
    <name evidence="1" type="primary">aroE</name>
    <name type="ordered locus">HS_0006</name>
</gene>
<feature type="chain" id="PRO_0000325120" description="Shikimate dehydrogenase (NADP(+))">
    <location>
        <begin position="1"/>
        <end position="271"/>
    </location>
</feature>
<feature type="active site" description="Proton acceptor" evidence="1">
    <location>
        <position position="65"/>
    </location>
</feature>
<feature type="binding site" evidence="1">
    <location>
        <begin position="14"/>
        <end position="16"/>
    </location>
    <ligand>
        <name>shikimate</name>
        <dbReference type="ChEBI" id="CHEBI:36208"/>
    </ligand>
</feature>
<feature type="binding site" evidence="1">
    <location>
        <position position="61"/>
    </location>
    <ligand>
        <name>shikimate</name>
        <dbReference type="ChEBI" id="CHEBI:36208"/>
    </ligand>
</feature>
<feature type="binding site" evidence="1">
    <location>
        <position position="86"/>
    </location>
    <ligand>
        <name>shikimate</name>
        <dbReference type="ChEBI" id="CHEBI:36208"/>
    </ligand>
</feature>
<feature type="binding site" evidence="1">
    <location>
        <position position="102"/>
    </location>
    <ligand>
        <name>shikimate</name>
        <dbReference type="ChEBI" id="CHEBI:36208"/>
    </ligand>
</feature>
<feature type="binding site" evidence="1">
    <location>
        <begin position="126"/>
        <end position="130"/>
    </location>
    <ligand>
        <name>NADP(+)</name>
        <dbReference type="ChEBI" id="CHEBI:58349"/>
    </ligand>
</feature>
<feature type="binding site" evidence="1">
    <location>
        <begin position="149"/>
        <end position="154"/>
    </location>
    <ligand>
        <name>NADP(+)</name>
        <dbReference type="ChEBI" id="CHEBI:58349"/>
    </ligand>
</feature>
<feature type="binding site" evidence="1">
    <location>
        <position position="213"/>
    </location>
    <ligand>
        <name>NADP(+)</name>
        <dbReference type="ChEBI" id="CHEBI:58349"/>
    </ligand>
</feature>
<feature type="binding site" evidence="1">
    <location>
        <position position="215"/>
    </location>
    <ligand>
        <name>shikimate</name>
        <dbReference type="ChEBI" id="CHEBI:36208"/>
    </ligand>
</feature>
<feature type="binding site" evidence="1">
    <location>
        <position position="238"/>
    </location>
    <ligand>
        <name>NADP(+)</name>
        <dbReference type="ChEBI" id="CHEBI:58349"/>
    </ligand>
</feature>
<sequence>MDKYAVWGNPIAQSRSPQLHRYFAKQTRQNLDYVAILGDEEKFEQQLSDFFAQGAKGCNITAPFKERAFKLAQQHSKRCLSAESCNTLKKLADGTLFADNTDGAGLVSDLQRLNWLKPNQRILILGAGGATKGVLLPLLQAQQNILITNRTFSRAEDLAHKFNHFGTIEALDLEHIPIQTFDLIINATSTGLQGKTIDIDPQILQLASAVYDMQYSKESDTPFIALCKKQGVTKISDGFGMLVGQAAHAFYLWRGVMPEIDPLFSGNEIKI</sequence>
<dbReference type="EC" id="1.1.1.25" evidence="1"/>
<dbReference type="EMBL" id="CP000436">
    <property type="protein sequence ID" value="ABI24287.1"/>
    <property type="molecule type" value="Genomic_DNA"/>
</dbReference>
<dbReference type="SMR" id="Q0I1B7"/>
<dbReference type="KEGG" id="hso:HS_0006"/>
<dbReference type="eggNOG" id="COG0169">
    <property type="taxonomic scope" value="Bacteria"/>
</dbReference>
<dbReference type="HOGENOM" id="CLU_044063_2_1_6"/>
<dbReference type="UniPathway" id="UPA00053">
    <property type="reaction ID" value="UER00087"/>
</dbReference>
<dbReference type="GO" id="GO:0005829">
    <property type="term" value="C:cytosol"/>
    <property type="evidence" value="ECO:0007669"/>
    <property type="project" value="TreeGrafter"/>
</dbReference>
<dbReference type="GO" id="GO:0050661">
    <property type="term" value="F:NADP binding"/>
    <property type="evidence" value="ECO:0007669"/>
    <property type="project" value="InterPro"/>
</dbReference>
<dbReference type="GO" id="GO:0004764">
    <property type="term" value="F:shikimate 3-dehydrogenase (NADP+) activity"/>
    <property type="evidence" value="ECO:0007669"/>
    <property type="project" value="UniProtKB-UniRule"/>
</dbReference>
<dbReference type="GO" id="GO:0008652">
    <property type="term" value="P:amino acid biosynthetic process"/>
    <property type="evidence" value="ECO:0007669"/>
    <property type="project" value="UniProtKB-KW"/>
</dbReference>
<dbReference type="GO" id="GO:0009073">
    <property type="term" value="P:aromatic amino acid family biosynthetic process"/>
    <property type="evidence" value="ECO:0007669"/>
    <property type="project" value="UniProtKB-KW"/>
</dbReference>
<dbReference type="GO" id="GO:0009423">
    <property type="term" value="P:chorismate biosynthetic process"/>
    <property type="evidence" value="ECO:0007669"/>
    <property type="project" value="UniProtKB-UniRule"/>
</dbReference>
<dbReference type="GO" id="GO:0019632">
    <property type="term" value="P:shikimate metabolic process"/>
    <property type="evidence" value="ECO:0007669"/>
    <property type="project" value="InterPro"/>
</dbReference>
<dbReference type="CDD" id="cd01065">
    <property type="entry name" value="NAD_bind_Shikimate_DH"/>
    <property type="match status" value="1"/>
</dbReference>
<dbReference type="FunFam" id="3.40.50.10860:FF:000006">
    <property type="entry name" value="Shikimate dehydrogenase (NADP(+))"/>
    <property type="match status" value="1"/>
</dbReference>
<dbReference type="FunFam" id="3.40.50.720:FF:000104">
    <property type="entry name" value="Shikimate dehydrogenase (NADP(+))"/>
    <property type="match status" value="1"/>
</dbReference>
<dbReference type="Gene3D" id="3.40.50.10860">
    <property type="entry name" value="Leucine Dehydrogenase, chain A, domain 1"/>
    <property type="match status" value="1"/>
</dbReference>
<dbReference type="Gene3D" id="3.40.50.720">
    <property type="entry name" value="NAD(P)-binding Rossmann-like Domain"/>
    <property type="match status" value="1"/>
</dbReference>
<dbReference type="HAMAP" id="MF_00222">
    <property type="entry name" value="Shikimate_DH_AroE"/>
    <property type="match status" value="1"/>
</dbReference>
<dbReference type="InterPro" id="IPR046346">
    <property type="entry name" value="Aminoacid_DH-like_N_sf"/>
</dbReference>
<dbReference type="InterPro" id="IPR036291">
    <property type="entry name" value="NAD(P)-bd_dom_sf"/>
</dbReference>
<dbReference type="InterPro" id="IPR041121">
    <property type="entry name" value="SDH_C"/>
</dbReference>
<dbReference type="InterPro" id="IPR011342">
    <property type="entry name" value="Shikimate_DH"/>
</dbReference>
<dbReference type="InterPro" id="IPR013708">
    <property type="entry name" value="Shikimate_DH-bd_N"/>
</dbReference>
<dbReference type="InterPro" id="IPR022893">
    <property type="entry name" value="Shikimate_DH_fam"/>
</dbReference>
<dbReference type="InterPro" id="IPR006151">
    <property type="entry name" value="Shikm_DH/Glu-tRNA_Rdtase"/>
</dbReference>
<dbReference type="NCBIfam" id="TIGR00507">
    <property type="entry name" value="aroE"/>
    <property type="match status" value="1"/>
</dbReference>
<dbReference type="NCBIfam" id="NF001310">
    <property type="entry name" value="PRK00258.1-2"/>
    <property type="match status" value="1"/>
</dbReference>
<dbReference type="PANTHER" id="PTHR21089:SF1">
    <property type="entry name" value="BIFUNCTIONAL 3-DEHYDROQUINATE DEHYDRATASE_SHIKIMATE DEHYDROGENASE, CHLOROPLASTIC"/>
    <property type="match status" value="1"/>
</dbReference>
<dbReference type="PANTHER" id="PTHR21089">
    <property type="entry name" value="SHIKIMATE DEHYDROGENASE"/>
    <property type="match status" value="1"/>
</dbReference>
<dbReference type="Pfam" id="PF18317">
    <property type="entry name" value="SDH_C"/>
    <property type="match status" value="1"/>
</dbReference>
<dbReference type="Pfam" id="PF01488">
    <property type="entry name" value="Shikimate_DH"/>
    <property type="match status" value="1"/>
</dbReference>
<dbReference type="Pfam" id="PF08501">
    <property type="entry name" value="Shikimate_dh_N"/>
    <property type="match status" value="1"/>
</dbReference>
<dbReference type="SUPFAM" id="SSF53223">
    <property type="entry name" value="Aminoacid dehydrogenase-like, N-terminal domain"/>
    <property type="match status" value="1"/>
</dbReference>
<dbReference type="SUPFAM" id="SSF51735">
    <property type="entry name" value="NAD(P)-binding Rossmann-fold domains"/>
    <property type="match status" value="1"/>
</dbReference>
<name>AROE_HISS1</name>
<proteinExistence type="inferred from homology"/>
<keyword id="KW-0028">Amino-acid biosynthesis</keyword>
<keyword id="KW-0057">Aromatic amino acid biosynthesis</keyword>
<keyword id="KW-0521">NADP</keyword>
<keyword id="KW-0560">Oxidoreductase</keyword>